<evidence type="ECO:0000250" key="1">
    <source>
        <dbReference type="UniProtKB" id="O75312"/>
    </source>
</evidence>
<evidence type="ECO:0000256" key="2">
    <source>
        <dbReference type="SAM" id="MobiDB-lite"/>
    </source>
</evidence>
<evidence type="ECO:0000269" key="3">
    <source>
    </source>
</evidence>
<evidence type="ECO:0000305" key="4"/>
<evidence type="ECO:0000312" key="5">
    <source>
        <dbReference type="EMBL" id="AAK93313.1"/>
    </source>
</evidence>
<evidence type="ECO:0000312" key="6">
    <source>
        <dbReference type="FlyBase" id="FBgn0030096"/>
    </source>
</evidence>
<evidence type="ECO:0000312" key="7">
    <source>
        <dbReference type="Proteomes" id="UP000000803"/>
    </source>
</evidence>
<feature type="chain" id="PRO_0000456081" description="Zinc finger protein ZPR1">
    <location>
        <begin position="1"/>
        <end position="457"/>
    </location>
</feature>
<feature type="zinc finger region" description="C4-type 1" evidence="1">
    <location>
        <begin position="43"/>
        <end position="75"/>
    </location>
</feature>
<feature type="zinc finger region" description="C4-type 2" evidence="1">
    <location>
        <begin position="261"/>
        <end position="293"/>
    </location>
</feature>
<feature type="region of interest" description="Disordered" evidence="2">
    <location>
        <begin position="1"/>
        <end position="21"/>
    </location>
</feature>
<feature type="region of interest" description="Disordered" evidence="2">
    <location>
        <begin position="414"/>
        <end position="457"/>
    </location>
</feature>
<feature type="compositionally biased region" description="Polar residues" evidence="2">
    <location>
        <begin position="1"/>
        <end position="13"/>
    </location>
</feature>
<feature type="compositionally biased region" description="Basic and acidic residues" evidence="2">
    <location>
        <begin position="425"/>
        <end position="438"/>
    </location>
</feature>
<feature type="compositionally biased region" description="Basic and acidic residues" evidence="2">
    <location>
        <begin position="448"/>
        <end position="457"/>
    </location>
</feature>
<dbReference type="EMBL" id="AE014298">
    <property type="protein sequence ID" value="AAF46456.1"/>
    <property type="molecule type" value="Genomic_DNA"/>
</dbReference>
<dbReference type="EMBL" id="AY051889">
    <property type="protein sequence ID" value="AAK93313.1"/>
    <property type="molecule type" value="mRNA"/>
</dbReference>
<dbReference type="RefSeq" id="NP_572532.1">
    <property type="nucleotide sequence ID" value="NM_132304.3"/>
</dbReference>
<dbReference type="SMR" id="Q9W379"/>
<dbReference type="FunCoup" id="Q9W379">
    <property type="interactions" value="2672"/>
</dbReference>
<dbReference type="IntAct" id="Q9W379">
    <property type="interactions" value="3"/>
</dbReference>
<dbReference type="STRING" id="7227.FBpp0071277"/>
<dbReference type="PaxDb" id="7227-FBpp0071277"/>
<dbReference type="DNASU" id="31851"/>
<dbReference type="EnsemblMetazoa" id="FBtr0071342">
    <property type="protein sequence ID" value="FBpp0071277"/>
    <property type="gene ID" value="FBgn0030096"/>
</dbReference>
<dbReference type="GeneID" id="31851"/>
<dbReference type="KEGG" id="dme:Dmel_CG9060"/>
<dbReference type="UCSC" id="CG9060-RA">
    <property type="organism name" value="d. melanogaster"/>
</dbReference>
<dbReference type="AGR" id="FB:FBgn0030096"/>
<dbReference type="CTD" id="8882"/>
<dbReference type="FlyBase" id="FBgn0030096">
    <property type="gene designation" value="Zpr1"/>
</dbReference>
<dbReference type="VEuPathDB" id="VectorBase:FBgn0030096"/>
<dbReference type="eggNOG" id="KOG2703">
    <property type="taxonomic scope" value="Eukaryota"/>
</dbReference>
<dbReference type="GeneTree" id="ENSGT00390000005306"/>
<dbReference type="HOGENOM" id="CLU_024138_5_0_1"/>
<dbReference type="InParanoid" id="Q9W379"/>
<dbReference type="OMA" id="FREVVIM"/>
<dbReference type="OrthoDB" id="308464at2759"/>
<dbReference type="BioGRID-ORCS" id="31851">
    <property type="hits" value="1 hit in 1 CRISPR screen"/>
</dbReference>
<dbReference type="GenomeRNAi" id="31851"/>
<dbReference type="PRO" id="PR:Q9W379"/>
<dbReference type="Proteomes" id="UP000000803">
    <property type="component" value="Chromosome X"/>
</dbReference>
<dbReference type="Bgee" id="FBgn0030096">
    <property type="expression patterns" value="Expressed in embryonic/larval hemocyte (Drosophila) and 44 other cell types or tissues"/>
</dbReference>
<dbReference type="GO" id="GO:0005737">
    <property type="term" value="C:cytoplasm"/>
    <property type="evidence" value="ECO:0000250"/>
    <property type="project" value="FlyBase"/>
</dbReference>
<dbReference type="GO" id="GO:0005634">
    <property type="term" value="C:nucleus"/>
    <property type="evidence" value="ECO:0000250"/>
    <property type="project" value="FlyBase"/>
</dbReference>
<dbReference type="GO" id="GO:0044183">
    <property type="term" value="F:protein folding chaperone"/>
    <property type="evidence" value="ECO:0000250"/>
    <property type="project" value="UniProtKB"/>
</dbReference>
<dbReference type="GO" id="GO:0031369">
    <property type="term" value="F:translation initiation factor binding"/>
    <property type="evidence" value="ECO:0000250"/>
    <property type="project" value="FlyBase"/>
</dbReference>
<dbReference type="GO" id="GO:0008270">
    <property type="term" value="F:zinc ion binding"/>
    <property type="evidence" value="ECO:0007669"/>
    <property type="project" value="UniProtKB-KW"/>
</dbReference>
<dbReference type="GO" id="GO:0071364">
    <property type="term" value="P:cellular response to epidermal growth factor stimulus"/>
    <property type="evidence" value="ECO:0000250"/>
    <property type="project" value="FlyBase"/>
</dbReference>
<dbReference type="GO" id="GO:0007173">
    <property type="term" value="P:epidermal growth factor receptor signaling pathway"/>
    <property type="evidence" value="ECO:0000316"/>
    <property type="project" value="FlyBase"/>
</dbReference>
<dbReference type="GO" id="GO:0008543">
    <property type="term" value="P:fibroblast growth factor receptor signaling pathway"/>
    <property type="evidence" value="ECO:0000316"/>
    <property type="project" value="FlyBase"/>
</dbReference>
<dbReference type="GO" id="GO:0035149">
    <property type="term" value="P:lumen formation, open tracheal system"/>
    <property type="evidence" value="ECO:0000316"/>
    <property type="project" value="FlyBase"/>
</dbReference>
<dbReference type="GO" id="GO:1990261">
    <property type="term" value="P:pre-mRNA catabolic process"/>
    <property type="evidence" value="ECO:0000250"/>
    <property type="project" value="FlyBase"/>
</dbReference>
<dbReference type="GO" id="GO:0006457">
    <property type="term" value="P:protein folding"/>
    <property type="evidence" value="ECO:0000250"/>
    <property type="project" value="UniProtKB"/>
</dbReference>
<dbReference type="GO" id="GO:0007430">
    <property type="term" value="P:terminal branching, open tracheal system"/>
    <property type="evidence" value="ECO:0000315"/>
    <property type="project" value="FlyBase"/>
</dbReference>
<dbReference type="FunFam" id="2.60.120.1040:FF:000007">
    <property type="entry name" value="Protein CBG06449"/>
    <property type="match status" value="1"/>
</dbReference>
<dbReference type="FunFam" id="2.20.25.420:FF:000001">
    <property type="entry name" value="Zinc finger protein ZPR1"/>
    <property type="match status" value="1"/>
</dbReference>
<dbReference type="FunFam" id="2.60.120.1040:FF:000001">
    <property type="entry name" value="Zinc finger protein ZPR1"/>
    <property type="match status" value="1"/>
</dbReference>
<dbReference type="FunFam" id="2.20.25.420:FF:000003">
    <property type="entry name" value="zinc finger protein ZPR1"/>
    <property type="match status" value="1"/>
</dbReference>
<dbReference type="Gene3D" id="2.60.120.1040">
    <property type="entry name" value="ZPR1, A/B domain"/>
    <property type="match status" value="2"/>
</dbReference>
<dbReference type="Gene3D" id="2.20.25.420">
    <property type="entry name" value="ZPR1, zinc finger domain"/>
    <property type="match status" value="2"/>
</dbReference>
<dbReference type="InterPro" id="IPR004457">
    <property type="entry name" value="Znf_ZPR1"/>
</dbReference>
<dbReference type="InterPro" id="IPR040141">
    <property type="entry name" value="ZPR1"/>
</dbReference>
<dbReference type="InterPro" id="IPR042451">
    <property type="entry name" value="ZPR1_A/B_dom"/>
</dbReference>
<dbReference type="InterPro" id="IPR056180">
    <property type="entry name" value="ZPR1_jr_dom"/>
</dbReference>
<dbReference type="InterPro" id="IPR042452">
    <property type="entry name" value="ZPR1_Znf1/2"/>
</dbReference>
<dbReference type="NCBIfam" id="TIGR00310">
    <property type="entry name" value="ZPR1_znf"/>
    <property type="match status" value="2"/>
</dbReference>
<dbReference type="PANTHER" id="PTHR10876">
    <property type="entry name" value="ZINC FINGER PROTEIN ZPR1"/>
    <property type="match status" value="1"/>
</dbReference>
<dbReference type="PANTHER" id="PTHR10876:SF0">
    <property type="entry name" value="ZINC FINGER PROTEIN ZPR1"/>
    <property type="match status" value="1"/>
</dbReference>
<dbReference type="Pfam" id="PF22794">
    <property type="entry name" value="jr-ZPR1"/>
    <property type="match status" value="2"/>
</dbReference>
<dbReference type="Pfam" id="PF03367">
    <property type="entry name" value="Zn_ribbon_ZPR1"/>
    <property type="match status" value="2"/>
</dbReference>
<dbReference type="SMART" id="SM00709">
    <property type="entry name" value="Zpr1"/>
    <property type="match status" value="2"/>
</dbReference>
<reference evidence="7" key="1">
    <citation type="journal article" date="2000" name="Science">
        <title>The genome sequence of Drosophila melanogaster.</title>
        <authorList>
            <person name="Adams M.D."/>
            <person name="Celniker S.E."/>
            <person name="Holt R.A."/>
            <person name="Evans C.A."/>
            <person name="Gocayne J.D."/>
            <person name="Amanatides P.G."/>
            <person name="Scherer S.E."/>
            <person name="Li P.W."/>
            <person name="Hoskins R.A."/>
            <person name="Galle R.F."/>
            <person name="George R.A."/>
            <person name="Lewis S.E."/>
            <person name="Richards S."/>
            <person name="Ashburner M."/>
            <person name="Henderson S.N."/>
            <person name="Sutton G.G."/>
            <person name="Wortman J.R."/>
            <person name="Yandell M.D."/>
            <person name="Zhang Q."/>
            <person name="Chen L.X."/>
            <person name="Brandon R.C."/>
            <person name="Rogers Y.-H.C."/>
            <person name="Blazej R.G."/>
            <person name="Champe M."/>
            <person name="Pfeiffer B.D."/>
            <person name="Wan K.H."/>
            <person name="Doyle C."/>
            <person name="Baxter E.G."/>
            <person name="Helt G."/>
            <person name="Nelson C.R."/>
            <person name="Miklos G.L.G."/>
            <person name="Abril J.F."/>
            <person name="Agbayani A."/>
            <person name="An H.-J."/>
            <person name="Andrews-Pfannkoch C."/>
            <person name="Baldwin D."/>
            <person name="Ballew R.M."/>
            <person name="Basu A."/>
            <person name="Baxendale J."/>
            <person name="Bayraktaroglu L."/>
            <person name="Beasley E.M."/>
            <person name="Beeson K.Y."/>
            <person name="Benos P.V."/>
            <person name="Berman B.P."/>
            <person name="Bhandari D."/>
            <person name="Bolshakov S."/>
            <person name="Borkova D."/>
            <person name="Botchan M.R."/>
            <person name="Bouck J."/>
            <person name="Brokstein P."/>
            <person name="Brottier P."/>
            <person name="Burtis K.C."/>
            <person name="Busam D.A."/>
            <person name="Butler H."/>
            <person name="Cadieu E."/>
            <person name="Center A."/>
            <person name="Chandra I."/>
            <person name="Cherry J.M."/>
            <person name="Cawley S."/>
            <person name="Dahlke C."/>
            <person name="Davenport L.B."/>
            <person name="Davies P."/>
            <person name="de Pablos B."/>
            <person name="Delcher A."/>
            <person name="Deng Z."/>
            <person name="Mays A.D."/>
            <person name="Dew I."/>
            <person name="Dietz S.M."/>
            <person name="Dodson K."/>
            <person name="Doup L.E."/>
            <person name="Downes M."/>
            <person name="Dugan-Rocha S."/>
            <person name="Dunkov B.C."/>
            <person name="Dunn P."/>
            <person name="Durbin K.J."/>
            <person name="Evangelista C.C."/>
            <person name="Ferraz C."/>
            <person name="Ferriera S."/>
            <person name="Fleischmann W."/>
            <person name="Fosler C."/>
            <person name="Gabrielian A.E."/>
            <person name="Garg N.S."/>
            <person name="Gelbart W.M."/>
            <person name="Glasser K."/>
            <person name="Glodek A."/>
            <person name="Gong F."/>
            <person name="Gorrell J.H."/>
            <person name="Gu Z."/>
            <person name="Guan P."/>
            <person name="Harris M."/>
            <person name="Harris N.L."/>
            <person name="Harvey D.A."/>
            <person name="Heiman T.J."/>
            <person name="Hernandez J.R."/>
            <person name="Houck J."/>
            <person name="Hostin D."/>
            <person name="Houston K.A."/>
            <person name="Howland T.J."/>
            <person name="Wei M.-H."/>
            <person name="Ibegwam C."/>
            <person name="Jalali M."/>
            <person name="Kalush F."/>
            <person name="Karpen G.H."/>
            <person name="Ke Z."/>
            <person name="Kennison J.A."/>
            <person name="Ketchum K.A."/>
            <person name="Kimmel B.E."/>
            <person name="Kodira C.D."/>
            <person name="Kraft C.L."/>
            <person name="Kravitz S."/>
            <person name="Kulp D."/>
            <person name="Lai Z."/>
            <person name="Lasko P."/>
            <person name="Lei Y."/>
            <person name="Levitsky A.A."/>
            <person name="Li J.H."/>
            <person name="Li Z."/>
            <person name="Liang Y."/>
            <person name="Lin X."/>
            <person name="Liu X."/>
            <person name="Mattei B."/>
            <person name="McIntosh T.C."/>
            <person name="McLeod M.P."/>
            <person name="McPherson D."/>
            <person name="Merkulov G."/>
            <person name="Milshina N.V."/>
            <person name="Mobarry C."/>
            <person name="Morris J."/>
            <person name="Moshrefi A."/>
            <person name="Mount S.M."/>
            <person name="Moy M."/>
            <person name="Murphy B."/>
            <person name="Murphy L."/>
            <person name="Muzny D.M."/>
            <person name="Nelson D.L."/>
            <person name="Nelson D.R."/>
            <person name="Nelson K.A."/>
            <person name="Nixon K."/>
            <person name="Nusskern D.R."/>
            <person name="Pacleb J.M."/>
            <person name="Palazzolo M."/>
            <person name="Pittman G.S."/>
            <person name="Pan S."/>
            <person name="Pollard J."/>
            <person name="Puri V."/>
            <person name="Reese M.G."/>
            <person name="Reinert K."/>
            <person name="Remington K."/>
            <person name="Saunders R.D.C."/>
            <person name="Scheeler F."/>
            <person name="Shen H."/>
            <person name="Shue B.C."/>
            <person name="Siden-Kiamos I."/>
            <person name="Simpson M."/>
            <person name="Skupski M.P."/>
            <person name="Smith T.J."/>
            <person name="Spier E."/>
            <person name="Spradling A.C."/>
            <person name="Stapleton M."/>
            <person name="Strong R."/>
            <person name="Sun E."/>
            <person name="Svirskas R."/>
            <person name="Tector C."/>
            <person name="Turner R."/>
            <person name="Venter E."/>
            <person name="Wang A.H."/>
            <person name="Wang X."/>
            <person name="Wang Z.-Y."/>
            <person name="Wassarman D.A."/>
            <person name="Weinstock G.M."/>
            <person name="Weissenbach J."/>
            <person name="Williams S.M."/>
            <person name="Woodage T."/>
            <person name="Worley K.C."/>
            <person name="Wu D."/>
            <person name="Yang S."/>
            <person name="Yao Q.A."/>
            <person name="Ye J."/>
            <person name="Yeh R.-F."/>
            <person name="Zaveri J.S."/>
            <person name="Zhan M."/>
            <person name="Zhang G."/>
            <person name="Zhao Q."/>
            <person name="Zheng L."/>
            <person name="Zheng X.H."/>
            <person name="Zhong F.N."/>
            <person name="Zhong W."/>
            <person name="Zhou X."/>
            <person name="Zhu S.C."/>
            <person name="Zhu X."/>
            <person name="Smith H.O."/>
            <person name="Gibbs R.A."/>
            <person name="Myers E.W."/>
            <person name="Rubin G.M."/>
            <person name="Venter J.C."/>
        </authorList>
    </citation>
    <scope>NUCLEOTIDE SEQUENCE [LARGE SCALE GENOMIC DNA]</scope>
    <source>
        <strain evidence="7">Berkeley</strain>
    </source>
</reference>
<reference evidence="7" key="2">
    <citation type="journal article" date="2002" name="Genome Biol.">
        <title>Annotation of the Drosophila melanogaster euchromatic genome: a systematic review.</title>
        <authorList>
            <person name="Misra S."/>
            <person name="Crosby M.A."/>
            <person name="Mungall C.J."/>
            <person name="Matthews B.B."/>
            <person name="Campbell K.S."/>
            <person name="Hradecky P."/>
            <person name="Huang Y."/>
            <person name="Kaminker J.S."/>
            <person name="Millburn G.H."/>
            <person name="Prochnik S.E."/>
            <person name="Smith C.D."/>
            <person name="Tupy J.L."/>
            <person name="Whitfield E.J."/>
            <person name="Bayraktaroglu L."/>
            <person name="Berman B.P."/>
            <person name="Bettencourt B.R."/>
            <person name="Celniker S.E."/>
            <person name="de Grey A.D.N.J."/>
            <person name="Drysdale R.A."/>
            <person name="Harris N.L."/>
            <person name="Richter J."/>
            <person name="Russo S."/>
            <person name="Schroeder A.J."/>
            <person name="Shu S.Q."/>
            <person name="Stapleton M."/>
            <person name="Yamada C."/>
            <person name="Ashburner M."/>
            <person name="Gelbart W.M."/>
            <person name="Rubin G.M."/>
            <person name="Lewis S.E."/>
        </authorList>
    </citation>
    <scope>GENOME REANNOTATION</scope>
    <source>
        <strain evidence="7">Berkeley</strain>
    </source>
</reference>
<reference evidence="5" key="3">
    <citation type="journal article" date="2002" name="Genome Biol.">
        <title>A Drosophila full-length cDNA resource.</title>
        <authorList>
            <person name="Stapleton M."/>
            <person name="Carlson J.W."/>
            <person name="Brokstein P."/>
            <person name="Yu C."/>
            <person name="Champe M."/>
            <person name="George R.A."/>
            <person name="Guarin H."/>
            <person name="Kronmiller B."/>
            <person name="Pacleb J.M."/>
            <person name="Park S."/>
            <person name="Wan K.H."/>
            <person name="Rubin G.M."/>
            <person name="Celniker S.E."/>
        </authorList>
    </citation>
    <scope>NUCLEOTIDE SEQUENCE [LARGE SCALE MRNA]</scope>
    <source>
        <strain evidence="5">Berkeley</strain>
        <tissue evidence="5">Embryo</tissue>
    </source>
</reference>
<reference evidence="4" key="4">
    <citation type="journal article" date="2012" name="PLoS ONE">
        <title>Drosophila Zpr1 (Zinc finger protein 1) is required downstream of both EGFR and FGFR signaling in tracheal subcellular lumen formation.</title>
        <authorList>
            <person name="Ruiz O.E."/>
            <person name="Nikolova L.S."/>
            <person name="Metzstein M.M."/>
        </authorList>
    </citation>
    <scope>FUNCTION</scope>
    <scope>DISRUPTION PHENOTYPE</scope>
</reference>
<organism evidence="7">
    <name type="scientific">Drosophila melanogaster</name>
    <name type="common">Fruit fly</name>
    <dbReference type="NCBI Taxonomy" id="7227"/>
    <lineage>
        <taxon>Eukaryota</taxon>
        <taxon>Metazoa</taxon>
        <taxon>Ecdysozoa</taxon>
        <taxon>Arthropoda</taxon>
        <taxon>Hexapoda</taxon>
        <taxon>Insecta</taxon>
        <taxon>Pterygota</taxon>
        <taxon>Neoptera</taxon>
        <taxon>Endopterygota</taxon>
        <taxon>Diptera</taxon>
        <taxon>Brachycera</taxon>
        <taxon>Muscomorpha</taxon>
        <taxon>Ephydroidea</taxon>
        <taxon>Drosophilidae</taxon>
        <taxon>Drosophila</taxon>
        <taxon>Sophophora</taxon>
    </lineage>
</organism>
<comment type="function">
    <text evidence="3">Might mediate EGFR and FGFR signal transduction cascades required for lumen formation in tracheal cells.</text>
</comment>
<comment type="disruption phenotype">
    <text evidence="3">RNAi-mediated knockdown in tracheal cells results in defective gas-filling lumen in terminal branches.</text>
</comment>
<comment type="similarity">
    <text evidence="4">Belongs to the ZPR1 family.</text>
</comment>
<name>ZPR1_DROME</name>
<gene>
    <name evidence="6" type="primary">Zpr1</name>
    <name evidence="6" type="ORF">CG9060</name>
</gene>
<protein>
    <recommendedName>
        <fullName evidence="4">Zinc finger protein ZPR1</fullName>
    </recommendedName>
</protein>
<sequence>MSTVSDPNSSNPPESAGNIRPEPIFREINAEQTDEIVEVESACMNCFETGVTRLLPTKIPFFREVVLMSFKCDHCGHINNEMQSASEIQKSGIRIELRVQSVADLNRRVVRSDNSSISIPEIELEIPVQSQKGEVTTVEGIIERTIAGLSQDQEKRRIDHPETAASIEKYIERLHRLKEVTTPFQVLLEDISGNSFIENPLAPAADPQLKTSYFTRSQQQNEQLGLYEQNHEEQHLLKPIAEDSWPIENLHGEVLQFPTNCPSCQAPCETNMKLTNIPHFKEVVIMATVCGACGHKTNEVKSGGGVEAQGVRFRVQIASREDLTRDVLKSETCSMSIPELDLEVGPHALCGRFTTVEGLLVAMRDQLDGTLFHDSADDATKQQMQRFLDTFEDVMNLKRVITLVLEDPAGNTYVQSLSDDDSEPDDKLTVERYDRSYEDNEDLGLNDMKTEGYEEKA</sequence>
<keyword id="KW-0479">Metal-binding</keyword>
<keyword id="KW-1185">Reference proteome</keyword>
<keyword id="KW-0677">Repeat</keyword>
<keyword id="KW-0862">Zinc</keyword>
<keyword id="KW-0863">Zinc-finger</keyword>
<accession>Q9W379</accession>
<proteinExistence type="evidence at transcript level"/>